<accession>A5F5N2</accession>
<accession>C3M4C6</accession>
<comment type="function">
    <text evidence="1">Catalyzes the initial step of the lipid cycle reactions in the biosynthesis of the cell wall peptidoglycan: transfers peptidoglycan precursor phospho-MurNAc-pentapeptide from UDP-MurNAc-pentapeptide onto the lipid carrier undecaprenyl phosphate, yielding undecaprenyl-pyrophosphoryl-MurNAc-pentapeptide, known as lipid I.</text>
</comment>
<comment type="catalytic activity">
    <reaction evidence="1">
        <text>UDP-N-acetyl-alpha-D-muramoyl-L-alanyl-gamma-D-glutamyl-meso-2,6-diaminopimeloyl-D-alanyl-D-alanine + di-trans,octa-cis-undecaprenyl phosphate = di-trans,octa-cis-undecaprenyl diphospho-N-acetyl-alpha-D-muramoyl-L-alanyl-D-glutamyl-meso-2,6-diaminopimeloyl-D-alanyl-D-alanine + UMP</text>
        <dbReference type="Rhea" id="RHEA:28386"/>
        <dbReference type="ChEBI" id="CHEBI:57865"/>
        <dbReference type="ChEBI" id="CHEBI:60392"/>
        <dbReference type="ChEBI" id="CHEBI:61386"/>
        <dbReference type="ChEBI" id="CHEBI:61387"/>
        <dbReference type="EC" id="2.7.8.13"/>
    </reaction>
</comment>
<comment type="cofactor">
    <cofactor evidence="1">
        <name>Mg(2+)</name>
        <dbReference type="ChEBI" id="CHEBI:18420"/>
    </cofactor>
</comment>
<comment type="pathway">
    <text evidence="1">Cell wall biogenesis; peptidoglycan biosynthesis.</text>
</comment>
<comment type="subcellular location">
    <subcellularLocation>
        <location evidence="1">Cell inner membrane</location>
        <topology evidence="1">Multi-pass membrane protein</topology>
    </subcellularLocation>
</comment>
<comment type="similarity">
    <text evidence="1">Belongs to the glycosyltransferase 4 family. MraY subfamily.</text>
</comment>
<keyword id="KW-0131">Cell cycle</keyword>
<keyword id="KW-0132">Cell division</keyword>
<keyword id="KW-0997">Cell inner membrane</keyword>
<keyword id="KW-1003">Cell membrane</keyword>
<keyword id="KW-0133">Cell shape</keyword>
<keyword id="KW-0961">Cell wall biogenesis/degradation</keyword>
<keyword id="KW-0460">Magnesium</keyword>
<keyword id="KW-0472">Membrane</keyword>
<keyword id="KW-0479">Metal-binding</keyword>
<keyword id="KW-0573">Peptidoglycan synthesis</keyword>
<keyword id="KW-0808">Transferase</keyword>
<keyword id="KW-0812">Transmembrane</keyword>
<keyword id="KW-1133">Transmembrane helix</keyword>
<reference key="1">
    <citation type="submission" date="2007-03" db="EMBL/GenBank/DDBJ databases">
        <authorList>
            <person name="Heidelberg J."/>
        </authorList>
    </citation>
    <scope>NUCLEOTIDE SEQUENCE [LARGE SCALE GENOMIC DNA]</scope>
    <source>
        <strain>ATCC 39541 / Classical Ogawa 395 / O395</strain>
    </source>
</reference>
<reference key="2">
    <citation type="journal article" date="2008" name="PLoS ONE">
        <title>A recalibrated molecular clock and independent origins for the cholera pandemic clones.</title>
        <authorList>
            <person name="Feng L."/>
            <person name="Reeves P.R."/>
            <person name="Lan R."/>
            <person name="Ren Y."/>
            <person name="Gao C."/>
            <person name="Zhou Z."/>
            <person name="Ren Y."/>
            <person name="Cheng J."/>
            <person name="Wang W."/>
            <person name="Wang J."/>
            <person name="Qian W."/>
            <person name="Li D."/>
            <person name="Wang L."/>
        </authorList>
    </citation>
    <scope>NUCLEOTIDE SEQUENCE [LARGE SCALE GENOMIC DNA]</scope>
    <source>
        <strain>ATCC 39541 / Classical Ogawa 395 / O395</strain>
    </source>
</reference>
<name>MRAY_VIBC3</name>
<evidence type="ECO:0000255" key="1">
    <source>
        <dbReference type="HAMAP-Rule" id="MF_00038"/>
    </source>
</evidence>
<gene>
    <name evidence="1" type="primary">mraY</name>
    <name type="ordered locus">VC0395_A1982</name>
    <name type="ordered locus">VC395_2519</name>
</gene>
<proteinExistence type="inferred from homology"/>
<sequence length="360" mass="39805">MIIWLAELLQPYFSFFRLFEYLSFRAIVSILTALGISLWMGPRMIKRLQMLQIGQVVRNEGPESHFSKRGTPTMGGVMILAAITITVLLWADLTNPYVWAVLAVLLGYGAVGFVDDYRKVVRKNTDGLIARWKYFWQSAIALVVAFALYAHGQDTAATQLVVPFFKDVMPQLGLMYIVLTYFVIVGTSNAVNLTDGLDGLAIMPTVLVAAGFAAIAWATGNVNFANYLHIPYIPHSSELVVVCTAMVGAGLGFLWFNTYPAQVFMGDVGALALGGALGTIAVLVRQEFVLVIMGGVFVMETLSVILQVGSYKLRGQRIFRMAPIHHHYELKGWPEPRVIVRFWVISIVLVLIGLATLKVR</sequence>
<dbReference type="EC" id="2.7.8.13" evidence="1"/>
<dbReference type="EMBL" id="CP000627">
    <property type="protein sequence ID" value="ABQ21193.1"/>
    <property type="molecule type" value="Genomic_DNA"/>
</dbReference>
<dbReference type="EMBL" id="CP001235">
    <property type="protein sequence ID" value="ACP10508.1"/>
    <property type="molecule type" value="Genomic_DNA"/>
</dbReference>
<dbReference type="RefSeq" id="WP_000587840.1">
    <property type="nucleotide sequence ID" value="NZ_JAACZH010000010.1"/>
</dbReference>
<dbReference type="SMR" id="A5F5N2"/>
<dbReference type="KEGG" id="vco:VC0395_A1982"/>
<dbReference type="KEGG" id="vcr:VC395_2519"/>
<dbReference type="PATRIC" id="fig|345073.21.peg.2423"/>
<dbReference type="eggNOG" id="COG0472">
    <property type="taxonomic scope" value="Bacteria"/>
</dbReference>
<dbReference type="HOGENOM" id="CLU_023982_0_0_6"/>
<dbReference type="OrthoDB" id="9805475at2"/>
<dbReference type="UniPathway" id="UPA00219"/>
<dbReference type="Proteomes" id="UP000000249">
    <property type="component" value="Chromosome 2"/>
</dbReference>
<dbReference type="GO" id="GO:0005886">
    <property type="term" value="C:plasma membrane"/>
    <property type="evidence" value="ECO:0007669"/>
    <property type="project" value="UniProtKB-SubCell"/>
</dbReference>
<dbReference type="GO" id="GO:0046872">
    <property type="term" value="F:metal ion binding"/>
    <property type="evidence" value="ECO:0007669"/>
    <property type="project" value="UniProtKB-KW"/>
</dbReference>
<dbReference type="GO" id="GO:0008963">
    <property type="term" value="F:phospho-N-acetylmuramoyl-pentapeptide-transferase activity"/>
    <property type="evidence" value="ECO:0007669"/>
    <property type="project" value="UniProtKB-UniRule"/>
</dbReference>
<dbReference type="GO" id="GO:0051992">
    <property type="term" value="F:UDP-N-acetylmuramoyl-L-alanyl-D-glutamyl-meso-2,6-diaminopimelyl-D-alanyl-D-alanine:undecaprenyl-phosphate transferase activity"/>
    <property type="evidence" value="ECO:0007669"/>
    <property type="project" value="RHEA"/>
</dbReference>
<dbReference type="GO" id="GO:0051301">
    <property type="term" value="P:cell division"/>
    <property type="evidence" value="ECO:0007669"/>
    <property type="project" value="UniProtKB-KW"/>
</dbReference>
<dbReference type="GO" id="GO:0071555">
    <property type="term" value="P:cell wall organization"/>
    <property type="evidence" value="ECO:0007669"/>
    <property type="project" value="UniProtKB-KW"/>
</dbReference>
<dbReference type="GO" id="GO:0009252">
    <property type="term" value="P:peptidoglycan biosynthetic process"/>
    <property type="evidence" value="ECO:0007669"/>
    <property type="project" value="UniProtKB-UniRule"/>
</dbReference>
<dbReference type="GO" id="GO:0008360">
    <property type="term" value="P:regulation of cell shape"/>
    <property type="evidence" value="ECO:0007669"/>
    <property type="project" value="UniProtKB-KW"/>
</dbReference>
<dbReference type="CDD" id="cd06852">
    <property type="entry name" value="GT_MraY"/>
    <property type="match status" value="1"/>
</dbReference>
<dbReference type="HAMAP" id="MF_00038">
    <property type="entry name" value="MraY"/>
    <property type="match status" value="1"/>
</dbReference>
<dbReference type="InterPro" id="IPR000715">
    <property type="entry name" value="Glycosyl_transferase_4"/>
</dbReference>
<dbReference type="InterPro" id="IPR003524">
    <property type="entry name" value="PNAcMuramoyl-5peptid_Trfase"/>
</dbReference>
<dbReference type="InterPro" id="IPR018480">
    <property type="entry name" value="PNAcMuramoyl-5peptid_Trfase_CS"/>
</dbReference>
<dbReference type="NCBIfam" id="TIGR00445">
    <property type="entry name" value="mraY"/>
    <property type="match status" value="1"/>
</dbReference>
<dbReference type="PANTHER" id="PTHR22926">
    <property type="entry name" value="PHOSPHO-N-ACETYLMURAMOYL-PENTAPEPTIDE-TRANSFERASE"/>
    <property type="match status" value="1"/>
</dbReference>
<dbReference type="PANTHER" id="PTHR22926:SF5">
    <property type="entry name" value="PHOSPHO-N-ACETYLMURAMOYL-PENTAPEPTIDE-TRANSFERASE HOMOLOG"/>
    <property type="match status" value="1"/>
</dbReference>
<dbReference type="Pfam" id="PF00953">
    <property type="entry name" value="Glycos_transf_4"/>
    <property type="match status" value="1"/>
</dbReference>
<dbReference type="Pfam" id="PF10555">
    <property type="entry name" value="MraY_sig1"/>
    <property type="match status" value="1"/>
</dbReference>
<dbReference type="PROSITE" id="PS01347">
    <property type="entry name" value="MRAY_1"/>
    <property type="match status" value="1"/>
</dbReference>
<dbReference type="PROSITE" id="PS01348">
    <property type="entry name" value="MRAY_2"/>
    <property type="match status" value="1"/>
</dbReference>
<feature type="chain" id="PRO_1000071054" description="Phospho-N-acetylmuramoyl-pentapeptide-transferase">
    <location>
        <begin position="1"/>
        <end position="360"/>
    </location>
</feature>
<feature type="transmembrane region" description="Helical" evidence="1">
    <location>
        <begin position="21"/>
        <end position="41"/>
    </location>
</feature>
<feature type="transmembrane region" description="Helical" evidence="1">
    <location>
        <begin position="73"/>
        <end position="93"/>
    </location>
</feature>
<feature type="transmembrane region" description="Helical" evidence="1">
    <location>
        <begin position="94"/>
        <end position="114"/>
    </location>
</feature>
<feature type="transmembrane region" description="Helical" evidence="1">
    <location>
        <begin position="132"/>
        <end position="152"/>
    </location>
</feature>
<feature type="transmembrane region" description="Helical" evidence="1">
    <location>
        <begin position="168"/>
        <end position="188"/>
    </location>
</feature>
<feature type="transmembrane region" description="Helical" evidence="1">
    <location>
        <begin position="199"/>
        <end position="219"/>
    </location>
</feature>
<feature type="transmembrane region" description="Helical" evidence="1">
    <location>
        <begin position="239"/>
        <end position="259"/>
    </location>
</feature>
<feature type="transmembrane region" description="Helical" evidence="1">
    <location>
        <begin position="263"/>
        <end position="283"/>
    </location>
</feature>
<feature type="transmembrane region" description="Helical" evidence="1">
    <location>
        <begin position="288"/>
        <end position="308"/>
    </location>
</feature>
<feature type="transmembrane region" description="Helical" evidence="1">
    <location>
        <begin position="338"/>
        <end position="358"/>
    </location>
</feature>
<organism>
    <name type="scientific">Vibrio cholerae serotype O1 (strain ATCC 39541 / Classical Ogawa 395 / O395)</name>
    <dbReference type="NCBI Taxonomy" id="345073"/>
    <lineage>
        <taxon>Bacteria</taxon>
        <taxon>Pseudomonadati</taxon>
        <taxon>Pseudomonadota</taxon>
        <taxon>Gammaproteobacteria</taxon>
        <taxon>Vibrionales</taxon>
        <taxon>Vibrionaceae</taxon>
        <taxon>Vibrio</taxon>
    </lineage>
</organism>
<protein>
    <recommendedName>
        <fullName evidence="1">Phospho-N-acetylmuramoyl-pentapeptide-transferase</fullName>
        <ecNumber evidence="1">2.7.8.13</ecNumber>
    </recommendedName>
    <alternativeName>
        <fullName evidence="1">UDP-MurNAc-pentapeptide phosphotransferase</fullName>
    </alternativeName>
</protein>